<gene>
    <name evidence="3" type="primary">eryD</name>
    <name evidence="5" type="ordered locus">BAB2_0369</name>
</gene>
<organism>
    <name type="scientific">Brucella abortus (strain 2308)</name>
    <dbReference type="NCBI Taxonomy" id="359391"/>
    <lineage>
        <taxon>Bacteria</taxon>
        <taxon>Pseudomonadati</taxon>
        <taxon>Pseudomonadota</taxon>
        <taxon>Alphaproteobacteria</taxon>
        <taxon>Hyphomicrobiales</taxon>
        <taxon>Brucellaceae</taxon>
        <taxon>Brucella/Ochrobactrum group</taxon>
        <taxon>Brucella</taxon>
    </lineage>
</organism>
<name>ERYD_BRUA2</name>
<accession>Q2YIQ4</accession>
<accession>Q578Y8</accession>
<accession>Q9ZB29</accession>
<keyword id="KW-0238">DNA-binding</keyword>
<keyword id="KW-1185">Reference proteome</keyword>
<keyword id="KW-0678">Repressor</keyword>
<keyword id="KW-0804">Transcription</keyword>
<keyword id="KW-0805">Transcription regulation</keyword>
<comment type="function">
    <text evidence="2">Represses the expression of the eryABCD operon, which is involved in erythritol catabolism.</text>
</comment>
<comment type="activity regulation">
    <text evidence="2">Erythritol may act as an inducer, probably by binding to EryD and inhibiting its repressor activity.</text>
</comment>
<comment type="induction">
    <text evidence="2">Induced by erythritol and negatively autoregulated.</text>
</comment>
<comment type="disruption phenotype">
    <text evidence="2">Mutant shows increased transcription from the ery promoter.</text>
</comment>
<comment type="similarity">
    <text evidence="4">Belongs to the SorC transcriptional regulatory family.</text>
</comment>
<proteinExistence type="evidence at transcript level"/>
<reference key="1">
    <citation type="journal article" date="2000" name="Microbiology">
        <title>The genes for erythritol catabolism are organized as an inducible operon in Brucella abortus.</title>
        <authorList>
            <person name="Sangari F.J."/>
            <person name="Aguero J."/>
            <person name="Garcia-Lobo J.M."/>
        </authorList>
    </citation>
    <scope>NUCLEOTIDE SEQUENCE [GENOMIC DNA]</scope>
    <scope>FUNCTION</scope>
    <scope>ACTIVITY REGULATION</scope>
    <scope>INDUCTION</scope>
    <scope>DISRUPTION PHENOTYPE</scope>
    <source>
        <strain>2308</strain>
    </source>
</reference>
<reference key="2">
    <citation type="journal article" date="2005" name="Infect. Immun.">
        <title>Whole-genome analyses of speciation events in pathogenic Brucellae.</title>
        <authorList>
            <person name="Chain P.S."/>
            <person name="Comerci D.J."/>
            <person name="Tolmasky M.E."/>
            <person name="Larimer F.W."/>
            <person name="Malfatti S.A."/>
            <person name="Vergez L.M."/>
            <person name="Aguero F."/>
            <person name="Land M.L."/>
            <person name="Ugalde R.A."/>
            <person name="Garcia E."/>
        </authorList>
    </citation>
    <scope>NUCLEOTIDE SEQUENCE [LARGE SCALE GENOMIC DNA]</scope>
    <source>
        <strain>2308</strain>
    </source>
</reference>
<dbReference type="EMBL" id="U57100">
    <property type="protein sequence ID" value="AAD11522.1"/>
    <property type="molecule type" value="Genomic_DNA"/>
</dbReference>
<dbReference type="EMBL" id="AM040265">
    <property type="protein sequence ID" value="CAJ12535.1"/>
    <property type="molecule type" value="Genomic_DNA"/>
</dbReference>
<dbReference type="RefSeq" id="WP_002965779.1">
    <property type="nucleotide sequence ID" value="NZ_KN046823.1"/>
</dbReference>
<dbReference type="SMR" id="Q2YIQ4"/>
<dbReference type="STRING" id="359391.BAB2_0369"/>
<dbReference type="KEGG" id="bmf:BAB2_0369"/>
<dbReference type="PATRIC" id="fig|235.14.peg.919"/>
<dbReference type="HOGENOM" id="CLU_054506_0_0_5"/>
<dbReference type="PhylomeDB" id="Q2YIQ4"/>
<dbReference type="Proteomes" id="UP000002719">
    <property type="component" value="Chromosome II"/>
</dbReference>
<dbReference type="GO" id="GO:0030246">
    <property type="term" value="F:carbohydrate binding"/>
    <property type="evidence" value="ECO:0007669"/>
    <property type="project" value="InterPro"/>
</dbReference>
<dbReference type="GO" id="GO:0003677">
    <property type="term" value="F:DNA binding"/>
    <property type="evidence" value="ECO:0007669"/>
    <property type="project" value="UniProtKB-KW"/>
</dbReference>
<dbReference type="Gene3D" id="3.40.50.1360">
    <property type="match status" value="1"/>
</dbReference>
<dbReference type="Gene3D" id="1.10.10.10">
    <property type="entry name" value="Winged helix-like DNA-binding domain superfamily/Winged helix DNA-binding domain"/>
    <property type="match status" value="1"/>
</dbReference>
<dbReference type="InterPro" id="IPR037171">
    <property type="entry name" value="NagB/RpiA_transferase-like"/>
</dbReference>
<dbReference type="InterPro" id="IPR051054">
    <property type="entry name" value="SorC_transcr_regulators"/>
</dbReference>
<dbReference type="InterPro" id="IPR007324">
    <property type="entry name" value="Sugar-bd_dom_put"/>
</dbReference>
<dbReference type="InterPro" id="IPR036388">
    <property type="entry name" value="WH-like_DNA-bd_sf"/>
</dbReference>
<dbReference type="PANTHER" id="PTHR34294:SF1">
    <property type="entry name" value="TRANSCRIPTIONAL REGULATOR LSRR"/>
    <property type="match status" value="1"/>
</dbReference>
<dbReference type="PANTHER" id="PTHR34294">
    <property type="entry name" value="TRANSCRIPTIONAL REGULATOR-RELATED"/>
    <property type="match status" value="1"/>
</dbReference>
<dbReference type="Pfam" id="PF04198">
    <property type="entry name" value="Sugar-bind"/>
    <property type="match status" value="1"/>
</dbReference>
<dbReference type="SUPFAM" id="SSF100950">
    <property type="entry name" value="NagB/RpiA/CoA transferase-like"/>
    <property type="match status" value="1"/>
</dbReference>
<sequence length="316" mass="33587">MADADDSLALRAAWLHFVAGMTQSAVAKRLGLPSVKAHRLIAKAVADGAVKVTIDGDITECIDLENRLADLYGLDYCEVAPDIGEEGLPLMALGHAGANFMRREIEHGDHEVIGIGHGRTLSAAVGYMPRVMANDLRFVSLLGGLTRNFAANPHDVMHRIAEKTGMPAYVMPVPFFANTAEDREVLLAQRGVTTVFDMGCRAELKIVGIGTVDAQAQLVTSGMIELGEVEEIANLGGVGEMLGHFFNANGQWLETALTGRTIAASVENADMSRIVALAGGLSKVDAIRAVLKSGRLYGLITDERTAKALIGQPNGK</sequence>
<protein>
    <recommendedName>
        <fullName evidence="4">Erythritol catabolism regulatory protein EryD</fullName>
    </recommendedName>
</protein>
<feature type="chain" id="PRO_0000446540" description="Erythritol catabolism regulatory protein EryD">
    <location>
        <begin position="1"/>
        <end position="316"/>
    </location>
</feature>
<feature type="DNA-binding region" description="H-T-H motif" evidence="1">
    <location>
        <begin position="23"/>
        <end position="42"/>
    </location>
</feature>
<evidence type="ECO:0000255" key="1"/>
<evidence type="ECO:0000269" key="2">
    <source>
    </source>
</evidence>
<evidence type="ECO:0000303" key="3">
    <source>
    </source>
</evidence>
<evidence type="ECO:0000305" key="4"/>
<evidence type="ECO:0000312" key="5">
    <source>
        <dbReference type="EMBL" id="CAJ12535.1"/>
    </source>
</evidence>